<dbReference type="EC" id="6.1.1.21" evidence="1"/>
<dbReference type="EMBL" id="AE015927">
    <property type="protein sequence ID" value="AAO36465.1"/>
    <property type="molecule type" value="Genomic_DNA"/>
</dbReference>
<dbReference type="RefSeq" id="WP_011100125.1">
    <property type="nucleotide sequence ID" value="NC_004557.1"/>
</dbReference>
<dbReference type="SMR" id="Q892X7"/>
<dbReference type="STRING" id="212717.CTC_01958"/>
<dbReference type="GeneID" id="24253001"/>
<dbReference type="KEGG" id="ctc:CTC_01958"/>
<dbReference type="HOGENOM" id="CLU_025113_3_0_9"/>
<dbReference type="OrthoDB" id="9800814at2"/>
<dbReference type="Proteomes" id="UP000001412">
    <property type="component" value="Chromosome"/>
</dbReference>
<dbReference type="GO" id="GO:0005737">
    <property type="term" value="C:cytoplasm"/>
    <property type="evidence" value="ECO:0007669"/>
    <property type="project" value="UniProtKB-SubCell"/>
</dbReference>
<dbReference type="GO" id="GO:0005524">
    <property type="term" value="F:ATP binding"/>
    <property type="evidence" value="ECO:0007669"/>
    <property type="project" value="UniProtKB-UniRule"/>
</dbReference>
<dbReference type="GO" id="GO:0140096">
    <property type="term" value="F:catalytic activity, acting on a protein"/>
    <property type="evidence" value="ECO:0007669"/>
    <property type="project" value="UniProtKB-ARBA"/>
</dbReference>
<dbReference type="GO" id="GO:0004821">
    <property type="term" value="F:histidine-tRNA ligase activity"/>
    <property type="evidence" value="ECO:0007669"/>
    <property type="project" value="UniProtKB-UniRule"/>
</dbReference>
<dbReference type="GO" id="GO:0016740">
    <property type="term" value="F:transferase activity"/>
    <property type="evidence" value="ECO:0007669"/>
    <property type="project" value="UniProtKB-ARBA"/>
</dbReference>
<dbReference type="GO" id="GO:0006427">
    <property type="term" value="P:histidyl-tRNA aminoacylation"/>
    <property type="evidence" value="ECO:0007669"/>
    <property type="project" value="UniProtKB-UniRule"/>
</dbReference>
<dbReference type="CDD" id="cd00773">
    <property type="entry name" value="HisRS-like_core"/>
    <property type="match status" value="1"/>
</dbReference>
<dbReference type="CDD" id="cd00859">
    <property type="entry name" value="HisRS_anticodon"/>
    <property type="match status" value="1"/>
</dbReference>
<dbReference type="Gene3D" id="3.40.50.800">
    <property type="entry name" value="Anticodon-binding domain"/>
    <property type="match status" value="1"/>
</dbReference>
<dbReference type="Gene3D" id="3.30.930.10">
    <property type="entry name" value="Bira Bifunctional Protein, Domain 2"/>
    <property type="match status" value="1"/>
</dbReference>
<dbReference type="HAMAP" id="MF_00127">
    <property type="entry name" value="His_tRNA_synth"/>
    <property type="match status" value="1"/>
</dbReference>
<dbReference type="InterPro" id="IPR006195">
    <property type="entry name" value="aa-tRNA-synth_II"/>
</dbReference>
<dbReference type="InterPro" id="IPR045864">
    <property type="entry name" value="aa-tRNA-synth_II/BPL/LPL"/>
</dbReference>
<dbReference type="InterPro" id="IPR004154">
    <property type="entry name" value="Anticodon-bd"/>
</dbReference>
<dbReference type="InterPro" id="IPR036621">
    <property type="entry name" value="Anticodon-bd_dom_sf"/>
</dbReference>
<dbReference type="InterPro" id="IPR015807">
    <property type="entry name" value="His-tRNA-ligase"/>
</dbReference>
<dbReference type="InterPro" id="IPR041715">
    <property type="entry name" value="HisRS-like_core"/>
</dbReference>
<dbReference type="InterPro" id="IPR004516">
    <property type="entry name" value="HisRS/HisZ"/>
</dbReference>
<dbReference type="InterPro" id="IPR033656">
    <property type="entry name" value="HisRS_anticodon"/>
</dbReference>
<dbReference type="NCBIfam" id="TIGR00442">
    <property type="entry name" value="hisS"/>
    <property type="match status" value="1"/>
</dbReference>
<dbReference type="PANTHER" id="PTHR11476:SF7">
    <property type="entry name" value="HISTIDINE--TRNA LIGASE"/>
    <property type="match status" value="1"/>
</dbReference>
<dbReference type="PANTHER" id="PTHR11476">
    <property type="entry name" value="HISTIDYL-TRNA SYNTHETASE"/>
    <property type="match status" value="1"/>
</dbReference>
<dbReference type="Pfam" id="PF03129">
    <property type="entry name" value="HGTP_anticodon"/>
    <property type="match status" value="1"/>
</dbReference>
<dbReference type="Pfam" id="PF13393">
    <property type="entry name" value="tRNA-synt_His"/>
    <property type="match status" value="1"/>
</dbReference>
<dbReference type="PIRSF" id="PIRSF001549">
    <property type="entry name" value="His-tRNA_synth"/>
    <property type="match status" value="1"/>
</dbReference>
<dbReference type="SUPFAM" id="SSF52954">
    <property type="entry name" value="Class II aaRS ABD-related"/>
    <property type="match status" value="1"/>
</dbReference>
<dbReference type="SUPFAM" id="SSF55681">
    <property type="entry name" value="Class II aaRS and biotin synthetases"/>
    <property type="match status" value="1"/>
</dbReference>
<dbReference type="PROSITE" id="PS50862">
    <property type="entry name" value="AA_TRNA_LIGASE_II"/>
    <property type="match status" value="1"/>
</dbReference>
<accession>Q892X7</accession>
<name>SYH_CLOTE</name>
<reference key="1">
    <citation type="journal article" date="2003" name="Proc. Natl. Acad. Sci. U.S.A.">
        <title>The genome sequence of Clostridium tetani, the causative agent of tetanus disease.</title>
        <authorList>
            <person name="Brueggemann H."/>
            <person name="Baeumer S."/>
            <person name="Fricke W.F."/>
            <person name="Wiezer A."/>
            <person name="Liesegang H."/>
            <person name="Decker I."/>
            <person name="Herzberg C."/>
            <person name="Martinez-Arias R."/>
            <person name="Merkl R."/>
            <person name="Henne A."/>
            <person name="Gottschalk G."/>
        </authorList>
    </citation>
    <scope>NUCLEOTIDE SEQUENCE [LARGE SCALE GENOMIC DNA]</scope>
    <source>
        <strain>Massachusetts / E88</strain>
    </source>
</reference>
<proteinExistence type="inferred from homology"/>
<evidence type="ECO:0000255" key="1">
    <source>
        <dbReference type="HAMAP-Rule" id="MF_00127"/>
    </source>
</evidence>
<keyword id="KW-0030">Aminoacyl-tRNA synthetase</keyword>
<keyword id="KW-0067">ATP-binding</keyword>
<keyword id="KW-0963">Cytoplasm</keyword>
<keyword id="KW-0436">Ligase</keyword>
<keyword id="KW-0547">Nucleotide-binding</keyword>
<keyword id="KW-0648">Protein biosynthesis</keyword>
<keyword id="KW-1185">Reference proteome</keyword>
<comment type="catalytic activity">
    <reaction evidence="1">
        <text>tRNA(His) + L-histidine + ATP = L-histidyl-tRNA(His) + AMP + diphosphate + H(+)</text>
        <dbReference type="Rhea" id="RHEA:17313"/>
        <dbReference type="Rhea" id="RHEA-COMP:9665"/>
        <dbReference type="Rhea" id="RHEA-COMP:9689"/>
        <dbReference type="ChEBI" id="CHEBI:15378"/>
        <dbReference type="ChEBI" id="CHEBI:30616"/>
        <dbReference type="ChEBI" id="CHEBI:33019"/>
        <dbReference type="ChEBI" id="CHEBI:57595"/>
        <dbReference type="ChEBI" id="CHEBI:78442"/>
        <dbReference type="ChEBI" id="CHEBI:78527"/>
        <dbReference type="ChEBI" id="CHEBI:456215"/>
        <dbReference type="EC" id="6.1.1.21"/>
    </reaction>
</comment>
<comment type="subunit">
    <text evidence="1">Homodimer.</text>
</comment>
<comment type="subcellular location">
    <subcellularLocation>
        <location evidence="1">Cytoplasm</location>
    </subcellularLocation>
</comment>
<comment type="similarity">
    <text evidence="1">Belongs to the class-II aminoacyl-tRNA synthetase family.</text>
</comment>
<sequence length="439" mass="50186">MKKDIVKPSILPGFMELLPADQIVFNKMKDTIRHNYEKFGFIPLDTPTIEKSEILLAKGGGETEKQIYRFNKGNTDLSLRFDLTVPLARYVSQHFSDLNFPFRRYHISKVFRGERNQKGRFREFYQCDIDIIGNGSLSIINDAEIPSIIYQTFKELGFEDFTIRINNRKVLNGFFEGTDVEDRKGVLRAIDKIEKIGEDGVRKELQELGLEDSKIDKIINFINIKGTKSEVIKSLKELDIENDVFKEGVYELEKVVHYIKSFNVPDKNYKIDLTIARGLDYYTGTVYETVLNNYPQIGSVCSGGRYDNLAEHYTNQKLPGVGISIGLTRLFYQLREAKIIGENASSTLSQALVIPVGDTMEYSIKVANKLRENEIISELYLEDAKIGKKFAYADKLKIPYVILIGEDELKEEKVSVKNMETGNQESMSLEEAIKIIKNA</sequence>
<feature type="chain" id="PRO_0000136143" description="Histidine--tRNA ligase">
    <location>
        <begin position="1"/>
        <end position="439"/>
    </location>
</feature>
<gene>
    <name evidence="1" type="primary">hisS</name>
    <name type="ordered locus">CTC_01958</name>
</gene>
<organism>
    <name type="scientific">Clostridium tetani (strain Massachusetts / E88)</name>
    <dbReference type="NCBI Taxonomy" id="212717"/>
    <lineage>
        <taxon>Bacteria</taxon>
        <taxon>Bacillati</taxon>
        <taxon>Bacillota</taxon>
        <taxon>Clostridia</taxon>
        <taxon>Eubacteriales</taxon>
        <taxon>Clostridiaceae</taxon>
        <taxon>Clostridium</taxon>
    </lineage>
</organism>
<protein>
    <recommendedName>
        <fullName evidence="1">Histidine--tRNA ligase</fullName>
        <ecNumber evidence="1">6.1.1.21</ecNumber>
    </recommendedName>
    <alternativeName>
        <fullName evidence="1">Histidyl-tRNA synthetase</fullName>
        <shortName evidence="1">HisRS</shortName>
    </alternativeName>
</protein>